<gene>
    <name type="primary">bod1</name>
    <name type="synonym">fam44b</name>
    <name type="ORF">TEgg028l03.1</name>
</gene>
<name>BOD1_XENTR</name>
<proteinExistence type="evidence at transcript level"/>
<keyword id="KW-0131">Cell cycle</keyword>
<keyword id="KW-0132">Cell division</keyword>
<keyword id="KW-0137">Centromere</keyword>
<keyword id="KW-0158">Chromosome</keyword>
<keyword id="KW-0963">Cytoplasm</keyword>
<keyword id="KW-0206">Cytoskeleton</keyword>
<keyword id="KW-0995">Kinetochore</keyword>
<keyword id="KW-0498">Mitosis</keyword>
<keyword id="KW-1185">Reference proteome</keyword>
<evidence type="ECO:0000250" key="1"/>
<evidence type="ECO:0000256" key="2">
    <source>
        <dbReference type="SAM" id="MobiDB-lite"/>
    </source>
</evidence>
<evidence type="ECO:0000305" key="3"/>
<feature type="chain" id="PRO_0000187032" description="Biorientation of chromosomes in cell division protein 1">
    <location>
        <begin position="1"/>
        <end position="169"/>
    </location>
</feature>
<feature type="region of interest" description="Disordered" evidence="2">
    <location>
        <begin position="1"/>
        <end position="23"/>
    </location>
</feature>
<feature type="region of interest" description="Disordered" evidence="2">
    <location>
        <begin position="136"/>
        <end position="169"/>
    </location>
</feature>
<feature type="compositionally biased region" description="Gly residues" evidence="2">
    <location>
        <begin position="1"/>
        <end position="10"/>
    </location>
</feature>
<feature type="compositionally biased region" description="Pro residues" evidence="2">
    <location>
        <begin position="146"/>
        <end position="169"/>
    </location>
</feature>
<sequence>MAESGSGAGSGSSSVGGVSNPTSLAPGDSQLIALIVEQLKSRGQFDGFRRDCLADVDTKPAYQNLRQKVDNFVSTHLDKQEWNADMNKNQLRNGLRQSVIQSGMLEAGVDRIISQVVDPKLNHIFRPQIEKAIQEYLAAQTKEEPAPPLPPGPPEPQEQEPPGPSQSVS</sequence>
<comment type="function">
    <text evidence="1">Required for proper chromosome biorientation through the detection or correction of syntelic attachments in mitotic spindles.</text>
</comment>
<comment type="subcellular location">
    <subcellularLocation>
        <location evidence="1">Cytoplasm</location>
        <location evidence="1">Cytoskeleton</location>
        <location evidence="1">Microtubule organizing center</location>
        <location evidence="1">Centrosome</location>
    </subcellularLocation>
    <subcellularLocation>
        <location evidence="1">Chromosome</location>
        <location evidence="1">Centromere</location>
        <location evidence="1">Kinetochore</location>
    </subcellularLocation>
    <text evidence="1">Localizes at the centrosomes throughout the cell cycle, only dissociating during cytokinesis. Localizes at the kinetochore from prometaphase until anaphase.</text>
</comment>
<comment type="similarity">
    <text evidence="3">Belongs to the BOD1 family.</text>
</comment>
<organism>
    <name type="scientific">Xenopus tropicalis</name>
    <name type="common">Western clawed frog</name>
    <name type="synonym">Silurana tropicalis</name>
    <dbReference type="NCBI Taxonomy" id="8364"/>
    <lineage>
        <taxon>Eukaryota</taxon>
        <taxon>Metazoa</taxon>
        <taxon>Chordata</taxon>
        <taxon>Craniata</taxon>
        <taxon>Vertebrata</taxon>
        <taxon>Euteleostomi</taxon>
        <taxon>Amphibia</taxon>
        <taxon>Batrachia</taxon>
        <taxon>Anura</taxon>
        <taxon>Pipoidea</taxon>
        <taxon>Pipidae</taxon>
        <taxon>Xenopodinae</taxon>
        <taxon>Xenopus</taxon>
        <taxon>Silurana</taxon>
    </lineage>
</organism>
<accession>Q68FB1</accession>
<accession>Q28H68</accession>
<dbReference type="EMBL" id="CR761021">
    <property type="protein sequence ID" value="CAJ81950.1"/>
    <property type="molecule type" value="mRNA"/>
</dbReference>
<dbReference type="EMBL" id="BC079931">
    <property type="protein sequence ID" value="AAH79931.1"/>
    <property type="molecule type" value="mRNA"/>
</dbReference>
<dbReference type="RefSeq" id="NP_001007495.1">
    <property type="nucleotide sequence ID" value="NM_001007494.1"/>
</dbReference>
<dbReference type="RefSeq" id="XP_012810034.1">
    <property type="nucleotide sequence ID" value="XM_012954580.2"/>
</dbReference>
<dbReference type="RefSeq" id="XP_012810035.1">
    <property type="nucleotide sequence ID" value="XM_012954581.3"/>
</dbReference>
<dbReference type="RefSeq" id="XP_012810036.1">
    <property type="nucleotide sequence ID" value="XM_012954582.3"/>
</dbReference>
<dbReference type="RefSeq" id="XP_012810037.1">
    <property type="nucleotide sequence ID" value="XM_012954583.3"/>
</dbReference>
<dbReference type="RefSeq" id="XP_017945730.1">
    <property type="nucleotide sequence ID" value="XM_018090241.1"/>
</dbReference>
<dbReference type="RefSeq" id="XP_031755878.1">
    <property type="nucleotide sequence ID" value="XM_031900018.1"/>
</dbReference>
<dbReference type="SMR" id="Q68FB1"/>
<dbReference type="FunCoup" id="Q68FB1">
    <property type="interactions" value="290"/>
</dbReference>
<dbReference type="STRING" id="8364.ENSXETP00000004015"/>
<dbReference type="PaxDb" id="8364-ENSXETP00000048799"/>
<dbReference type="DNASU" id="493221"/>
<dbReference type="GeneID" id="493221"/>
<dbReference type="KEGG" id="xtr:493221"/>
<dbReference type="AGR" id="Xenbase:XB-GENE-5810100"/>
<dbReference type="CTD" id="91272"/>
<dbReference type="Xenbase" id="XB-GENE-5810100">
    <property type="gene designation" value="bod1"/>
</dbReference>
<dbReference type="eggNOG" id="ENOG502S57W">
    <property type="taxonomic scope" value="Eukaryota"/>
</dbReference>
<dbReference type="HOGENOM" id="CLU_139504_0_0_1"/>
<dbReference type="InParanoid" id="Q68FB1"/>
<dbReference type="OMA" id="IICQVVD"/>
<dbReference type="PhylomeDB" id="Q68FB1"/>
<dbReference type="TreeFam" id="TF325311"/>
<dbReference type="Proteomes" id="UP000008143">
    <property type="component" value="Chromosome 4"/>
</dbReference>
<dbReference type="Bgee" id="ENSXETG00000022543">
    <property type="expression patterns" value="Expressed in 2-cell stage embryo and 14 other cell types or tissues"/>
</dbReference>
<dbReference type="ExpressionAtlas" id="Q68FB1">
    <property type="expression patterns" value="differential"/>
</dbReference>
<dbReference type="GO" id="GO:0005813">
    <property type="term" value="C:centrosome"/>
    <property type="evidence" value="ECO:0007669"/>
    <property type="project" value="UniProtKB-SubCell"/>
</dbReference>
<dbReference type="GO" id="GO:0005737">
    <property type="term" value="C:cytoplasm"/>
    <property type="evidence" value="ECO:0007669"/>
    <property type="project" value="UniProtKB-KW"/>
</dbReference>
<dbReference type="GO" id="GO:0000776">
    <property type="term" value="C:kinetochore"/>
    <property type="evidence" value="ECO:0007669"/>
    <property type="project" value="UniProtKB-KW"/>
</dbReference>
<dbReference type="GO" id="GO:0051301">
    <property type="term" value="P:cell division"/>
    <property type="evidence" value="ECO:0007669"/>
    <property type="project" value="UniProtKB-KW"/>
</dbReference>
<dbReference type="InterPro" id="IPR055264">
    <property type="entry name" value="BOD1/SHG1_dom"/>
</dbReference>
<dbReference type="InterPro" id="IPR043244">
    <property type="entry name" value="BOD1L1"/>
</dbReference>
<dbReference type="PANTHER" id="PTHR47391">
    <property type="entry name" value="BIORIENTATION OF CHROMOSOMES IN CELL DIVISION 1 LIKE 1"/>
    <property type="match status" value="1"/>
</dbReference>
<dbReference type="PANTHER" id="PTHR47391:SF1">
    <property type="entry name" value="BIORIENTATION OF CHROMOSOMES IN CELL DIVISION 1 LIKE 1"/>
    <property type="match status" value="1"/>
</dbReference>
<dbReference type="Pfam" id="PF05205">
    <property type="entry name" value="COMPASS-Shg1"/>
    <property type="match status" value="1"/>
</dbReference>
<protein>
    <recommendedName>
        <fullName>Biorientation of chromosomes in cell division protein 1</fullName>
    </recommendedName>
    <alternativeName>
        <fullName>Biorientation defective protein 1</fullName>
    </alternativeName>
    <alternativeName>
        <fullName>Protein FAM44B</fullName>
    </alternativeName>
</protein>
<reference key="1">
    <citation type="submission" date="2006-03" db="EMBL/GenBank/DDBJ databases">
        <authorList>
            <consortium name="Sanger Xenopus tropicalis EST/cDNA project"/>
        </authorList>
    </citation>
    <scope>NUCLEOTIDE SEQUENCE [LARGE SCALE MRNA]</scope>
    <source>
        <tissue>Egg</tissue>
    </source>
</reference>
<reference key="2">
    <citation type="submission" date="2004-08" db="EMBL/GenBank/DDBJ databases">
        <authorList>
            <consortium name="NIH - Xenopus Gene Collection (XGC) project"/>
        </authorList>
    </citation>
    <scope>NUCLEOTIDE SEQUENCE [LARGE SCALE MRNA]</scope>
    <source>
        <tissue>Embryo</tissue>
    </source>
</reference>